<dbReference type="EC" id="3.1.1.29" evidence="1"/>
<dbReference type="EMBL" id="CP000792">
    <property type="protein sequence ID" value="EAT99009.3"/>
    <property type="molecule type" value="Genomic_DNA"/>
</dbReference>
<dbReference type="RefSeq" id="WP_048809772.1">
    <property type="nucleotide sequence ID" value="NC_009802.2"/>
</dbReference>
<dbReference type="SMR" id="A7ZCE9"/>
<dbReference type="STRING" id="360104.CCC13826_1586"/>
<dbReference type="KEGG" id="cco:CCC13826_1586"/>
<dbReference type="eggNOG" id="COG0193">
    <property type="taxonomic scope" value="Bacteria"/>
</dbReference>
<dbReference type="HOGENOM" id="CLU_062456_4_1_7"/>
<dbReference type="OrthoDB" id="9800507at2"/>
<dbReference type="Proteomes" id="UP000001121">
    <property type="component" value="Chromosome"/>
</dbReference>
<dbReference type="GO" id="GO:0005737">
    <property type="term" value="C:cytoplasm"/>
    <property type="evidence" value="ECO:0007669"/>
    <property type="project" value="UniProtKB-SubCell"/>
</dbReference>
<dbReference type="GO" id="GO:0004045">
    <property type="term" value="F:peptidyl-tRNA hydrolase activity"/>
    <property type="evidence" value="ECO:0007669"/>
    <property type="project" value="UniProtKB-UniRule"/>
</dbReference>
<dbReference type="GO" id="GO:0000049">
    <property type="term" value="F:tRNA binding"/>
    <property type="evidence" value="ECO:0007669"/>
    <property type="project" value="UniProtKB-UniRule"/>
</dbReference>
<dbReference type="GO" id="GO:0006515">
    <property type="term" value="P:protein quality control for misfolded or incompletely synthesized proteins"/>
    <property type="evidence" value="ECO:0007669"/>
    <property type="project" value="UniProtKB-UniRule"/>
</dbReference>
<dbReference type="GO" id="GO:0072344">
    <property type="term" value="P:rescue of stalled ribosome"/>
    <property type="evidence" value="ECO:0007669"/>
    <property type="project" value="UniProtKB-UniRule"/>
</dbReference>
<dbReference type="CDD" id="cd00462">
    <property type="entry name" value="PTH"/>
    <property type="match status" value="1"/>
</dbReference>
<dbReference type="FunFam" id="3.40.50.1470:FF:000001">
    <property type="entry name" value="Peptidyl-tRNA hydrolase"/>
    <property type="match status" value="1"/>
</dbReference>
<dbReference type="Gene3D" id="3.40.50.1470">
    <property type="entry name" value="Peptidyl-tRNA hydrolase"/>
    <property type="match status" value="1"/>
</dbReference>
<dbReference type="HAMAP" id="MF_00083">
    <property type="entry name" value="Pept_tRNA_hydro_bact"/>
    <property type="match status" value="1"/>
</dbReference>
<dbReference type="InterPro" id="IPR001328">
    <property type="entry name" value="Pept_tRNA_hydro"/>
</dbReference>
<dbReference type="InterPro" id="IPR018171">
    <property type="entry name" value="Pept_tRNA_hydro_CS"/>
</dbReference>
<dbReference type="InterPro" id="IPR036416">
    <property type="entry name" value="Pept_tRNA_hydro_sf"/>
</dbReference>
<dbReference type="NCBIfam" id="TIGR00447">
    <property type="entry name" value="pth"/>
    <property type="match status" value="1"/>
</dbReference>
<dbReference type="PANTHER" id="PTHR17224">
    <property type="entry name" value="PEPTIDYL-TRNA HYDROLASE"/>
    <property type="match status" value="1"/>
</dbReference>
<dbReference type="PANTHER" id="PTHR17224:SF1">
    <property type="entry name" value="PEPTIDYL-TRNA HYDROLASE"/>
    <property type="match status" value="1"/>
</dbReference>
<dbReference type="Pfam" id="PF01195">
    <property type="entry name" value="Pept_tRNA_hydro"/>
    <property type="match status" value="1"/>
</dbReference>
<dbReference type="SUPFAM" id="SSF53178">
    <property type="entry name" value="Peptidyl-tRNA hydrolase-like"/>
    <property type="match status" value="1"/>
</dbReference>
<dbReference type="PROSITE" id="PS01195">
    <property type="entry name" value="PEPT_TRNA_HYDROL_1"/>
    <property type="match status" value="1"/>
</dbReference>
<dbReference type="PROSITE" id="PS01196">
    <property type="entry name" value="PEPT_TRNA_HYDROL_2"/>
    <property type="match status" value="1"/>
</dbReference>
<keyword id="KW-0963">Cytoplasm</keyword>
<keyword id="KW-0378">Hydrolase</keyword>
<keyword id="KW-0694">RNA-binding</keyword>
<keyword id="KW-0820">tRNA-binding</keyword>
<name>PTH_CAMC1</name>
<feature type="chain" id="PRO_1000071224" description="Peptidyl-tRNA hydrolase">
    <location>
        <begin position="1"/>
        <end position="182"/>
    </location>
</feature>
<feature type="active site" description="Proton acceptor" evidence="1">
    <location>
        <position position="19"/>
    </location>
</feature>
<feature type="binding site" evidence="1">
    <location>
        <position position="14"/>
    </location>
    <ligand>
        <name>tRNA</name>
        <dbReference type="ChEBI" id="CHEBI:17843"/>
    </ligand>
</feature>
<feature type="binding site" evidence="1">
    <location>
        <position position="60"/>
    </location>
    <ligand>
        <name>tRNA</name>
        <dbReference type="ChEBI" id="CHEBI:17843"/>
    </ligand>
</feature>
<feature type="binding site" evidence="1">
    <location>
        <position position="62"/>
    </location>
    <ligand>
        <name>tRNA</name>
        <dbReference type="ChEBI" id="CHEBI:17843"/>
    </ligand>
</feature>
<feature type="binding site" evidence="1">
    <location>
        <position position="106"/>
    </location>
    <ligand>
        <name>tRNA</name>
        <dbReference type="ChEBI" id="CHEBI:17843"/>
    </ligand>
</feature>
<feature type="site" description="Discriminates between blocked and unblocked aminoacyl-tRNA" evidence="1">
    <location>
        <position position="9"/>
    </location>
</feature>
<feature type="site" description="Stabilizes the basic form of H active site to accept a proton" evidence="1">
    <location>
        <position position="85"/>
    </location>
</feature>
<sequence>MTLIAGLGNPGPKYENTRHNIGFMLIDLLKDSNFKDVSSAKFQGEVFKFNGIILLKPTTFMNLSGQSVKAVRDFYKPDRIIVIHDDLDLSFGAVKFKKGGSSGGHNGIKSIDNLIGNDYERVRVGIGHEGDAKNFVLGEFSDEEKKALDEILAYTKNAVCELLKSDINEISQKFTVKKGLIK</sequence>
<evidence type="ECO:0000255" key="1">
    <source>
        <dbReference type="HAMAP-Rule" id="MF_00083"/>
    </source>
</evidence>
<reference key="1">
    <citation type="submission" date="2007-10" db="EMBL/GenBank/DDBJ databases">
        <title>Genome sequence of Campylobacter concisus 13826 isolated from human feces.</title>
        <authorList>
            <person name="Fouts D.E."/>
            <person name="Mongodin E.F."/>
            <person name="Puiu D."/>
            <person name="Sebastian Y."/>
            <person name="Miller W.G."/>
            <person name="Mandrell R.E."/>
            <person name="On S."/>
            <person name="Nelson K.E."/>
        </authorList>
    </citation>
    <scope>NUCLEOTIDE SEQUENCE [LARGE SCALE GENOMIC DNA]</scope>
    <source>
        <strain>13826</strain>
    </source>
</reference>
<gene>
    <name evidence="1" type="primary">pth</name>
    <name type="ordered locus">Ccon26_05650</name>
    <name type="ORF">CCC13826_1586</name>
</gene>
<protein>
    <recommendedName>
        <fullName evidence="1">Peptidyl-tRNA hydrolase</fullName>
        <shortName evidence="1">Pth</shortName>
        <ecNumber evidence="1">3.1.1.29</ecNumber>
    </recommendedName>
</protein>
<organism>
    <name type="scientific">Campylobacter concisus (strain 13826)</name>
    <dbReference type="NCBI Taxonomy" id="360104"/>
    <lineage>
        <taxon>Bacteria</taxon>
        <taxon>Pseudomonadati</taxon>
        <taxon>Campylobacterota</taxon>
        <taxon>Epsilonproteobacteria</taxon>
        <taxon>Campylobacterales</taxon>
        <taxon>Campylobacteraceae</taxon>
        <taxon>Campylobacter</taxon>
    </lineage>
</organism>
<proteinExistence type="inferred from homology"/>
<comment type="function">
    <text evidence="1">Hydrolyzes ribosome-free peptidyl-tRNAs (with 1 or more amino acids incorporated), which drop off the ribosome during protein synthesis, or as a result of ribosome stalling.</text>
</comment>
<comment type="function">
    <text evidence="1">Catalyzes the release of premature peptidyl moieties from peptidyl-tRNA molecules trapped in stalled 50S ribosomal subunits, and thus maintains levels of free tRNAs and 50S ribosomes.</text>
</comment>
<comment type="catalytic activity">
    <reaction evidence="1">
        <text>an N-acyl-L-alpha-aminoacyl-tRNA + H2O = an N-acyl-L-amino acid + a tRNA + H(+)</text>
        <dbReference type="Rhea" id="RHEA:54448"/>
        <dbReference type="Rhea" id="RHEA-COMP:10123"/>
        <dbReference type="Rhea" id="RHEA-COMP:13883"/>
        <dbReference type="ChEBI" id="CHEBI:15377"/>
        <dbReference type="ChEBI" id="CHEBI:15378"/>
        <dbReference type="ChEBI" id="CHEBI:59874"/>
        <dbReference type="ChEBI" id="CHEBI:78442"/>
        <dbReference type="ChEBI" id="CHEBI:138191"/>
        <dbReference type="EC" id="3.1.1.29"/>
    </reaction>
</comment>
<comment type="subunit">
    <text evidence="1">Monomer.</text>
</comment>
<comment type="subcellular location">
    <subcellularLocation>
        <location evidence="1">Cytoplasm</location>
    </subcellularLocation>
</comment>
<comment type="similarity">
    <text evidence="1">Belongs to the PTH family.</text>
</comment>
<accession>A7ZCE9</accession>